<proteinExistence type="inferred from homology"/>
<keyword id="KW-0021">Allosteric enzyme</keyword>
<keyword id="KW-0067">ATP-binding</keyword>
<keyword id="KW-0215">Deoxyribonucleotide synthesis</keyword>
<keyword id="KW-1015">Disulfide bond</keyword>
<keyword id="KW-0547">Nucleotide-binding</keyword>
<keyword id="KW-0560">Oxidoreductase</keyword>
<organism>
    <name type="scientific">Helicobacter pylori (strain J99 / ATCC 700824)</name>
    <name type="common">Campylobacter pylori J99</name>
    <dbReference type="NCBI Taxonomy" id="85963"/>
    <lineage>
        <taxon>Bacteria</taxon>
        <taxon>Pseudomonadati</taxon>
        <taxon>Campylobacterota</taxon>
        <taxon>Epsilonproteobacteria</taxon>
        <taxon>Campylobacterales</taxon>
        <taxon>Helicobacteraceae</taxon>
        <taxon>Helicobacter</taxon>
    </lineage>
</organism>
<name>RIR1_HELPJ</name>
<accession>Q9ZLF9</accession>
<evidence type="ECO:0000250" key="1"/>
<evidence type="ECO:0000250" key="2">
    <source>
        <dbReference type="UniProtKB" id="P00452"/>
    </source>
</evidence>
<evidence type="ECO:0000255" key="3">
    <source>
        <dbReference type="PROSITE-ProRule" id="PRU00492"/>
    </source>
</evidence>
<evidence type="ECO:0000305" key="4"/>
<feature type="chain" id="PRO_0000187216" description="Ribonucleoside-diphosphate reductase subunit alpha">
    <location>
        <begin position="1"/>
        <end position="788"/>
    </location>
</feature>
<feature type="domain" description="ATP-cone" evidence="3">
    <location>
        <begin position="2"/>
        <end position="92"/>
    </location>
</feature>
<feature type="active site" description="Proton acceptor" evidence="1">
    <location>
        <position position="424"/>
    </location>
</feature>
<feature type="active site" description="Cysteine radical intermediate" evidence="1">
    <location>
        <position position="426"/>
    </location>
</feature>
<feature type="active site" description="Proton acceptor" evidence="1">
    <location>
        <position position="428"/>
    </location>
</feature>
<feature type="binding site" evidence="2">
    <location>
        <position position="6"/>
    </location>
    <ligand>
        <name>ATP</name>
        <dbReference type="ChEBI" id="CHEBI:30616"/>
        <note>allosteric activator</note>
    </ligand>
</feature>
<feature type="binding site" evidence="2">
    <location>
        <begin position="12"/>
        <end position="18"/>
    </location>
    <ligand>
        <name>ATP</name>
        <dbReference type="ChEBI" id="CHEBI:30616"/>
        <note>allosteric activator</note>
    </ligand>
</feature>
<feature type="binding site" evidence="2">
    <location>
        <position position="52"/>
    </location>
    <ligand>
        <name>ATP</name>
        <dbReference type="ChEBI" id="CHEBI:30616"/>
        <note>allosteric activator</note>
    </ligand>
</feature>
<feature type="binding site" evidence="2">
    <location>
        <position position="200"/>
    </location>
    <ligand>
        <name>GDP</name>
        <dbReference type="ChEBI" id="CHEBI:58189"/>
    </ligand>
</feature>
<feature type="binding site" evidence="2">
    <location>
        <begin position="223"/>
        <end position="225"/>
    </location>
    <ligand>
        <name>dTTP</name>
        <dbReference type="ChEBI" id="CHEBI:37568"/>
        <note>allosteric effector that controls substrate specificity</note>
    </ligand>
</feature>
<feature type="binding site" evidence="2">
    <location>
        <position position="253"/>
    </location>
    <ligand>
        <name>dTTP</name>
        <dbReference type="ChEBI" id="CHEBI:37568"/>
        <note>allosteric effector that controls substrate specificity</note>
    </ligand>
</feature>
<feature type="binding site" evidence="2">
    <location>
        <position position="424"/>
    </location>
    <ligand>
        <name>GDP</name>
        <dbReference type="ChEBI" id="CHEBI:58189"/>
    </ligand>
</feature>
<feature type="binding site" evidence="2">
    <location>
        <position position="428"/>
    </location>
    <ligand>
        <name>GDP</name>
        <dbReference type="ChEBI" id="CHEBI:58189"/>
    </ligand>
</feature>
<feature type="binding site" evidence="2">
    <location>
        <begin position="661"/>
        <end position="663"/>
    </location>
    <ligand>
        <name>GDP</name>
        <dbReference type="ChEBI" id="CHEBI:58189"/>
    </ligand>
</feature>
<feature type="site" description="Important for hydrogen atom transfer" evidence="1">
    <location>
        <position position="216"/>
    </location>
</feature>
<feature type="site" description="Important for hydrogen atom transfer" evidence="1">
    <location>
        <position position="497"/>
    </location>
</feature>
<feature type="site" description="Important for electron transfer" evidence="1">
    <location>
        <position position="763"/>
    </location>
</feature>
<feature type="site" description="Important for electron transfer" evidence="1">
    <location>
        <position position="764"/>
    </location>
</feature>
<feature type="site" description="Interacts with thioredoxin/glutaredoxin" evidence="1">
    <location>
        <position position="784"/>
    </location>
</feature>
<feature type="site" description="Interacts with thioredoxin/glutaredoxin" evidence="1">
    <location>
        <position position="787"/>
    </location>
</feature>
<feature type="disulfide bond" description="Redox-active" evidence="1">
    <location>
        <begin position="216"/>
        <end position="497"/>
    </location>
</feature>
<comment type="function">
    <text evidence="1">Provides the precursors necessary for DNA synthesis. Catalyzes the biosynthesis of deoxyribonucleotides from the corresponding ribonucleotides (By similarity).</text>
</comment>
<comment type="catalytic activity">
    <reaction>
        <text>a 2'-deoxyribonucleoside 5'-diphosphate + [thioredoxin]-disulfide + H2O = a ribonucleoside 5'-diphosphate + [thioredoxin]-dithiol</text>
        <dbReference type="Rhea" id="RHEA:23252"/>
        <dbReference type="Rhea" id="RHEA-COMP:10698"/>
        <dbReference type="Rhea" id="RHEA-COMP:10700"/>
        <dbReference type="ChEBI" id="CHEBI:15377"/>
        <dbReference type="ChEBI" id="CHEBI:29950"/>
        <dbReference type="ChEBI" id="CHEBI:50058"/>
        <dbReference type="ChEBI" id="CHEBI:57930"/>
        <dbReference type="ChEBI" id="CHEBI:73316"/>
        <dbReference type="EC" id="1.17.4.1"/>
    </reaction>
</comment>
<comment type="activity regulation">
    <text evidence="1">Under complex allosteric control mediated by deoxynucleoside triphosphates and ATP binding to separate specificity and activation sites on the alpha subunit. The type of nucleotide bound at the specificity site determines substrate preference. It seems probable that ATP makes the enzyme reduce CDP and UDP, dGTP favors ADP reduction and dTTP favors GDP reduction. Stimulated by ATP and inhibited by dATP binding to the activity site (By similarity).</text>
</comment>
<comment type="subunit">
    <text evidence="1">Tetramer of two alpha and two beta subunits.</text>
</comment>
<comment type="similarity">
    <text evidence="4">Belongs to the ribonucleoside diphosphate reductase large chain family.</text>
</comment>
<reference key="1">
    <citation type="journal article" date="1999" name="Nature">
        <title>Genomic sequence comparison of two unrelated isolates of the human gastric pathogen Helicobacter pylori.</title>
        <authorList>
            <person name="Alm R.A."/>
            <person name="Ling L.-S.L."/>
            <person name="Moir D.T."/>
            <person name="King B.L."/>
            <person name="Brown E.D."/>
            <person name="Doig P.C."/>
            <person name="Smith D.R."/>
            <person name="Noonan B."/>
            <person name="Guild B.C."/>
            <person name="deJonge B.L."/>
            <person name="Carmel G."/>
            <person name="Tummino P.J."/>
            <person name="Caruso A."/>
            <person name="Uria-Nickelsen M."/>
            <person name="Mills D.M."/>
            <person name="Ives C."/>
            <person name="Gibson R."/>
            <person name="Merberg D."/>
            <person name="Mills S.D."/>
            <person name="Jiang Q."/>
            <person name="Taylor D.E."/>
            <person name="Vovis G.F."/>
            <person name="Trust T.J."/>
        </authorList>
    </citation>
    <scope>NUCLEOTIDE SEQUENCE [LARGE SCALE GENOMIC DNA]</scope>
    <source>
        <strain>J99 / ATCC 700824</strain>
    </source>
</reference>
<gene>
    <name type="primary">nrdA</name>
    <name type="ordered locus">jhp_0621</name>
</gene>
<dbReference type="EC" id="1.17.4.1"/>
<dbReference type="EMBL" id="AE001439">
    <property type="protein sequence ID" value="AAD06201.1"/>
    <property type="molecule type" value="Genomic_DNA"/>
</dbReference>
<dbReference type="PIR" id="F71908">
    <property type="entry name" value="F71908"/>
</dbReference>
<dbReference type="RefSeq" id="WP_000633948.1">
    <property type="nucleotide sequence ID" value="NC_000921.1"/>
</dbReference>
<dbReference type="SMR" id="Q9ZLF9"/>
<dbReference type="KEGG" id="hpj:jhp_0621"/>
<dbReference type="PATRIC" id="fig|85963.30.peg.363"/>
<dbReference type="eggNOG" id="COG0209">
    <property type="taxonomic scope" value="Bacteria"/>
</dbReference>
<dbReference type="Proteomes" id="UP000000804">
    <property type="component" value="Chromosome"/>
</dbReference>
<dbReference type="GO" id="GO:0005971">
    <property type="term" value="C:ribonucleoside-diphosphate reductase complex"/>
    <property type="evidence" value="ECO:0007669"/>
    <property type="project" value="TreeGrafter"/>
</dbReference>
<dbReference type="GO" id="GO:0005524">
    <property type="term" value="F:ATP binding"/>
    <property type="evidence" value="ECO:0007669"/>
    <property type="project" value="UniProtKB-KW"/>
</dbReference>
<dbReference type="GO" id="GO:0004748">
    <property type="term" value="F:ribonucleoside-diphosphate reductase activity, thioredoxin disulfide as acceptor"/>
    <property type="evidence" value="ECO:0007669"/>
    <property type="project" value="UniProtKB-EC"/>
</dbReference>
<dbReference type="GO" id="GO:0009263">
    <property type="term" value="P:deoxyribonucleotide biosynthetic process"/>
    <property type="evidence" value="ECO:0007669"/>
    <property type="project" value="UniProtKB-KW"/>
</dbReference>
<dbReference type="CDD" id="cd01679">
    <property type="entry name" value="RNR_I"/>
    <property type="match status" value="1"/>
</dbReference>
<dbReference type="Gene3D" id="3.20.70.20">
    <property type="match status" value="1"/>
</dbReference>
<dbReference type="InterPro" id="IPR005144">
    <property type="entry name" value="ATP-cone_dom"/>
</dbReference>
<dbReference type="InterPro" id="IPR013346">
    <property type="entry name" value="NrdE_NrdA_C"/>
</dbReference>
<dbReference type="InterPro" id="IPR000788">
    <property type="entry name" value="RNR_lg_C"/>
</dbReference>
<dbReference type="InterPro" id="IPR013509">
    <property type="entry name" value="RNR_lsu_N"/>
</dbReference>
<dbReference type="InterPro" id="IPR008926">
    <property type="entry name" value="RNR_R1-su_N"/>
</dbReference>
<dbReference type="InterPro" id="IPR039718">
    <property type="entry name" value="Rrm1"/>
</dbReference>
<dbReference type="NCBIfam" id="TIGR02506">
    <property type="entry name" value="NrdE_NrdA"/>
    <property type="match status" value="1"/>
</dbReference>
<dbReference type="NCBIfam" id="NF006279">
    <property type="entry name" value="PRK08447.1"/>
    <property type="match status" value="1"/>
</dbReference>
<dbReference type="PANTHER" id="PTHR11573">
    <property type="entry name" value="RIBONUCLEOSIDE-DIPHOSPHATE REDUCTASE LARGE CHAIN"/>
    <property type="match status" value="1"/>
</dbReference>
<dbReference type="PANTHER" id="PTHR11573:SF6">
    <property type="entry name" value="RIBONUCLEOSIDE-DIPHOSPHATE REDUCTASE LARGE SUBUNIT"/>
    <property type="match status" value="1"/>
</dbReference>
<dbReference type="Pfam" id="PF03477">
    <property type="entry name" value="ATP-cone"/>
    <property type="match status" value="1"/>
</dbReference>
<dbReference type="Pfam" id="PF02867">
    <property type="entry name" value="Ribonuc_red_lgC"/>
    <property type="match status" value="1"/>
</dbReference>
<dbReference type="Pfam" id="PF00317">
    <property type="entry name" value="Ribonuc_red_lgN"/>
    <property type="match status" value="1"/>
</dbReference>
<dbReference type="PRINTS" id="PR01183">
    <property type="entry name" value="RIBORDTASEM1"/>
</dbReference>
<dbReference type="SUPFAM" id="SSF51998">
    <property type="entry name" value="PFL-like glycyl radical enzymes"/>
    <property type="match status" value="1"/>
</dbReference>
<dbReference type="SUPFAM" id="SSF48168">
    <property type="entry name" value="R1 subunit of ribonucleotide reductase, N-terminal domain"/>
    <property type="match status" value="1"/>
</dbReference>
<dbReference type="PROSITE" id="PS51161">
    <property type="entry name" value="ATP_CONE"/>
    <property type="match status" value="1"/>
</dbReference>
<dbReference type="PROSITE" id="PS00089">
    <property type="entry name" value="RIBORED_LARGE"/>
    <property type="match status" value="1"/>
</dbReference>
<sequence>MITVVKRNGRIEPLDITKIQKYTKDATDNLEGVSQSELEVDARLQFRDKITTEEIQQTLIKTAVDKIDIDTPNWSFVASRLFLYDLYHKVSGFTGYRHLKEYFENAEEKGRILKGFKEKFDLEFLNSQIKPERDFQFNYLGIKTLYDRYLLKDANNHPIELPQHMFMSIAMFLAQNEQELNKIALEFYEVLSKFEAMCATPTLANARTTKHQLSSCYIGSTPDNIEGIFDSYKEMALLSKYGGGIGWDFSLVRSIGSYIDGHKNASAGTIPFLKIANDVAIAVDQLGTRKGAIAVYLEIWHIDVMEFIDLRKNSGDERRRAHDLFPALWVCDLFMKRVLEDAMWTLFDPYECKDLTELYGQDFEKRYLEYEKDPKIIKEYINAKDLWKKILMNYFEAGLPFLAFKDNANRCNPNAHAGIIRSSNLCTEIFQNTAPNHYYMQIEYTDGAIEFFEEKELVTTDSNITKCANKLTSTDILKGKKIYIATKVAKDGQTAVCNLASINLSKINTEEDIKRVVPIMVRLLDNVIDLNFYPNRKVKATNLQNRAIGLGVMGEAQMLAEHQIAWGSKEHLEKIDALMEQISYHAIDTSANLAKEKGVYKDFENSEWSKGIFPIDKANNEALKLTEKGLFNHACDWQGLREKVKANGMRNGYLMAIAPTSSISILVGTTQTIEPIYKKKWFEENLSGLIPVVVPNLNVETWNFYTSAYDIDAKDLIKAAAVRQKWIDQGQSINVFLRIENASGKTLHEIYTLAWKLGLKSTYYLRSESPSIDEKSVLDRSVECFNCQ</sequence>
<protein>
    <recommendedName>
        <fullName>Ribonucleoside-diphosphate reductase subunit alpha</fullName>
        <ecNumber>1.17.4.1</ecNumber>
    </recommendedName>
    <alternativeName>
        <fullName>Ribonucleotide reductase</fullName>
    </alternativeName>
</protein>